<comment type="function">
    <text evidence="1">Catalyzes the phosphorylation of 5-dehydro-2-deoxy-D-gluconate (2-deoxy-5-keto-D-gluconate or DKG) to 6-phospho-5-dehydro-2-deoxy-D-gluconate (DKGP).</text>
</comment>
<comment type="catalytic activity">
    <reaction evidence="1">
        <text>5-dehydro-2-deoxy-D-gluconate + ATP = 6-phospho-5-dehydro-2-deoxy-D-gluconate + ADP + H(+)</text>
        <dbReference type="Rhea" id="RHEA:13497"/>
        <dbReference type="ChEBI" id="CHEBI:15378"/>
        <dbReference type="ChEBI" id="CHEBI:16669"/>
        <dbReference type="ChEBI" id="CHEBI:30616"/>
        <dbReference type="ChEBI" id="CHEBI:57949"/>
        <dbReference type="ChEBI" id="CHEBI:456216"/>
        <dbReference type="EC" id="2.7.1.92"/>
    </reaction>
</comment>
<comment type="pathway">
    <text evidence="1">Polyol metabolism; myo-inositol degradation into acetyl-CoA; acetyl-CoA from myo-inositol: step 5/7.</text>
</comment>
<comment type="similarity">
    <text evidence="1">Belongs to the carbohydrate kinase PfkB family.</text>
</comment>
<sequence length="337" mass="37581">MNLLPFDEQKPLDFIAVGRLCIDLNANEIHRPMEETVTFTKYVGGSPANIAIGMARLGMKTGFIGRVADDQMGRFIVQYLKNNGIDTSHVITDKSGSVTGLAFTEIKSPTDCSILMYRDNVADLKLEPNDIHEDYIRQAKCLLISGTALAKSPSREAVFLALEYARRHGVVVFFDLDYRPYTWQSKEETAIYYNLAAEKCDVIIGTREEFDMMEQFAVHQHDDEKTAQKWFDYHAKIVVIKHGKDGSIAYTKTGETFVGTIFPANIVKTFGAGDSYAAGFIYGLMNGWPIPKAMEYGAAAASIVISSHSCSDAMPTLDQIEQFIQHIKAARPLQNHK</sequence>
<reference key="1">
    <citation type="journal article" date="2007" name="Proc. Natl. Acad. Sci. U.S.A.">
        <title>Genome and proteome of long-chain alkane degrading Geobacillus thermodenitrificans NG80-2 isolated from a deep-subsurface oil reservoir.</title>
        <authorList>
            <person name="Feng L."/>
            <person name="Wang W."/>
            <person name="Cheng J."/>
            <person name="Ren Y."/>
            <person name="Zhao G."/>
            <person name="Gao C."/>
            <person name="Tang Y."/>
            <person name="Liu X."/>
            <person name="Han W."/>
            <person name="Peng X."/>
            <person name="Liu R."/>
            <person name="Wang L."/>
        </authorList>
    </citation>
    <scope>NUCLEOTIDE SEQUENCE [LARGE SCALE GENOMIC DNA]</scope>
    <source>
        <strain>NG80-2</strain>
    </source>
</reference>
<dbReference type="EC" id="2.7.1.92" evidence="1"/>
<dbReference type="EMBL" id="CP000557">
    <property type="protein sequence ID" value="ABO67167.1"/>
    <property type="molecule type" value="Genomic_DNA"/>
</dbReference>
<dbReference type="RefSeq" id="WP_011887532.1">
    <property type="nucleotide sequence ID" value="NC_009328.1"/>
</dbReference>
<dbReference type="SMR" id="A4IPB3"/>
<dbReference type="KEGG" id="gtn:GTNG_1807"/>
<dbReference type="eggNOG" id="COG0524">
    <property type="taxonomic scope" value="Bacteria"/>
</dbReference>
<dbReference type="HOGENOM" id="CLU_027634_6_0_9"/>
<dbReference type="UniPathway" id="UPA00076">
    <property type="reaction ID" value="UER00146"/>
</dbReference>
<dbReference type="Proteomes" id="UP000001578">
    <property type="component" value="Chromosome"/>
</dbReference>
<dbReference type="GO" id="GO:0047590">
    <property type="term" value="F:5-dehydro-2-deoxygluconokinase activity"/>
    <property type="evidence" value="ECO:0007669"/>
    <property type="project" value="UniProtKB-UniRule"/>
</dbReference>
<dbReference type="GO" id="GO:0005524">
    <property type="term" value="F:ATP binding"/>
    <property type="evidence" value="ECO:0007669"/>
    <property type="project" value="UniProtKB-UniRule"/>
</dbReference>
<dbReference type="GO" id="GO:0019310">
    <property type="term" value="P:inositol catabolic process"/>
    <property type="evidence" value="ECO:0007669"/>
    <property type="project" value="UniProtKB-UniRule"/>
</dbReference>
<dbReference type="CDD" id="cd01166">
    <property type="entry name" value="KdgK"/>
    <property type="match status" value="1"/>
</dbReference>
<dbReference type="Gene3D" id="3.40.1190.20">
    <property type="match status" value="1"/>
</dbReference>
<dbReference type="Gene3D" id="2.20.150.10">
    <property type="entry name" value="putative 5-dehydro-2- deoxygluconokinase"/>
    <property type="match status" value="1"/>
</dbReference>
<dbReference type="HAMAP" id="MF_01668">
    <property type="entry name" value="IolC"/>
    <property type="match status" value="1"/>
</dbReference>
<dbReference type="InterPro" id="IPR002173">
    <property type="entry name" value="Carboh/pur_kinase_PfkB_CS"/>
</dbReference>
<dbReference type="InterPro" id="IPR022841">
    <property type="entry name" value="DKG_kinase_firmi"/>
</dbReference>
<dbReference type="InterPro" id="IPR030830">
    <property type="entry name" value="Myo_inos_IolC"/>
</dbReference>
<dbReference type="InterPro" id="IPR023314">
    <property type="entry name" value="Myo_inos_IolC-like_sf"/>
</dbReference>
<dbReference type="InterPro" id="IPR050306">
    <property type="entry name" value="PfkB_Carbo_kinase"/>
</dbReference>
<dbReference type="InterPro" id="IPR011611">
    <property type="entry name" value="PfkB_dom"/>
</dbReference>
<dbReference type="InterPro" id="IPR029056">
    <property type="entry name" value="Ribokinase-like"/>
</dbReference>
<dbReference type="NCBIfam" id="TIGR04382">
    <property type="entry name" value="myo_inos_iolC_N"/>
    <property type="match status" value="1"/>
</dbReference>
<dbReference type="PANTHER" id="PTHR43085:SF49">
    <property type="entry name" value="5-DEHYDRO-2-DEOXYGLUCONOKINASE"/>
    <property type="match status" value="1"/>
</dbReference>
<dbReference type="PANTHER" id="PTHR43085">
    <property type="entry name" value="HEXOKINASE FAMILY MEMBER"/>
    <property type="match status" value="1"/>
</dbReference>
<dbReference type="Pfam" id="PF00294">
    <property type="entry name" value="PfkB"/>
    <property type="match status" value="1"/>
</dbReference>
<dbReference type="SUPFAM" id="SSF53613">
    <property type="entry name" value="Ribokinase-like"/>
    <property type="match status" value="1"/>
</dbReference>
<dbReference type="PROSITE" id="PS00584">
    <property type="entry name" value="PFKB_KINASES_2"/>
    <property type="match status" value="1"/>
</dbReference>
<gene>
    <name evidence="1" type="primary">iolC</name>
    <name type="ordered locus">GTNG_1807</name>
</gene>
<organism>
    <name type="scientific">Geobacillus thermodenitrificans (strain NG80-2)</name>
    <dbReference type="NCBI Taxonomy" id="420246"/>
    <lineage>
        <taxon>Bacteria</taxon>
        <taxon>Bacillati</taxon>
        <taxon>Bacillota</taxon>
        <taxon>Bacilli</taxon>
        <taxon>Bacillales</taxon>
        <taxon>Anoxybacillaceae</taxon>
        <taxon>Geobacillus</taxon>
    </lineage>
</organism>
<accession>A4IPB3</accession>
<feature type="chain" id="PRO_0000352300" description="5-dehydro-2-deoxygluconokinase">
    <location>
        <begin position="1"/>
        <end position="337"/>
    </location>
</feature>
<evidence type="ECO:0000255" key="1">
    <source>
        <dbReference type="HAMAP-Rule" id="MF_01668"/>
    </source>
</evidence>
<keyword id="KW-0067">ATP-binding</keyword>
<keyword id="KW-0418">Kinase</keyword>
<keyword id="KW-0547">Nucleotide-binding</keyword>
<keyword id="KW-0808">Transferase</keyword>
<name>IOLC_GEOTN</name>
<proteinExistence type="inferred from homology"/>
<protein>
    <recommendedName>
        <fullName evidence="1">5-dehydro-2-deoxygluconokinase</fullName>
        <ecNumber evidence="1">2.7.1.92</ecNumber>
    </recommendedName>
    <alternativeName>
        <fullName evidence="1">2-deoxy-5-keto-D-gluconate kinase</fullName>
        <shortName evidence="1">DKG kinase</shortName>
    </alternativeName>
</protein>